<dbReference type="EC" id="4.1.1.39" evidence="1"/>
<dbReference type="EMBL" id="L11686">
    <property type="protein sequence ID" value="AAA84349.1"/>
    <property type="molecule type" value="Genomic_DNA"/>
</dbReference>
<dbReference type="GO" id="GO:0009507">
    <property type="term" value="C:chloroplast"/>
    <property type="evidence" value="ECO:0007669"/>
    <property type="project" value="UniProtKB-SubCell"/>
</dbReference>
<dbReference type="GO" id="GO:0000287">
    <property type="term" value="F:magnesium ion binding"/>
    <property type="evidence" value="ECO:0007669"/>
    <property type="project" value="InterPro"/>
</dbReference>
<dbReference type="GO" id="GO:0004497">
    <property type="term" value="F:monooxygenase activity"/>
    <property type="evidence" value="ECO:0007669"/>
    <property type="project" value="UniProtKB-KW"/>
</dbReference>
<dbReference type="GO" id="GO:0016984">
    <property type="term" value="F:ribulose-bisphosphate carboxylase activity"/>
    <property type="evidence" value="ECO:0007669"/>
    <property type="project" value="UniProtKB-EC"/>
</dbReference>
<dbReference type="GO" id="GO:0009853">
    <property type="term" value="P:photorespiration"/>
    <property type="evidence" value="ECO:0007669"/>
    <property type="project" value="UniProtKB-KW"/>
</dbReference>
<dbReference type="GO" id="GO:0019253">
    <property type="term" value="P:reductive pentose-phosphate cycle"/>
    <property type="evidence" value="ECO:0007669"/>
    <property type="project" value="UniProtKB-KW"/>
</dbReference>
<dbReference type="CDD" id="cd08212">
    <property type="entry name" value="RuBisCO_large_I"/>
    <property type="match status" value="1"/>
</dbReference>
<dbReference type="FunFam" id="3.20.20.110:FF:000001">
    <property type="entry name" value="Ribulose bisphosphate carboxylase large chain"/>
    <property type="match status" value="1"/>
</dbReference>
<dbReference type="Gene3D" id="3.20.20.110">
    <property type="entry name" value="Ribulose bisphosphate carboxylase, large subunit, C-terminal domain"/>
    <property type="match status" value="1"/>
</dbReference>
<dbReference type="Gene3D" id="3.30.70.150">
    <property type="entry name" value="RuBisCO large subunit, N-terminal domain"/>
    <property type="match status" value="1"/>
</dbReference>
<dbReference type="HAMAP" id="MF_01338">
    <property type="entry name" value="RuBisCO_L_type1"/>
    <property type="match status" value="1"/>
</dbReference>
<dbReference type="InterPro" id="IPR033966">
    <property type="entry name" value="RuBisCO"/>
</dbReference>
<dbReference type="InterPro" id="IPR020878">
    <property type="entry name" value="RuBisCo_large_chain_AS"/>
</dbReference>
<dbReference type="InterPro" id="IPR000685">
    <property type="entry name" value="RuBisCO_lsu_C"/>
</dbReference>
<dbReference type="InterPro" id="IPR036376">
    <property type="entry name" value="RuBisCO_lsu_C_sf"/>
</dbReference>
<dbReference type="InterPro" id="IPR017443">
    <property type="entry name" value="RuBisCO_lsu_fd_N"/>
</dbReference>
<dbReference type="InterPro" id="IPR036422">
    <property type="entry name" value="RuBisCO_lsu_N_sf"/>
</dbReference>
<dbReference type="InterPro" id="IPR020888">
    <property type="entry name" value="RuBisCO_lsuI"/>
</dbReference>
<dbReference type="NCBIfam" id="NF003252">
    <property type="entry name" value="PRK04208.1"/>
    <property type="match status" value="1"/>
</dbReference>
<dbReference type="PANTHER" id="PTHR42704">
    <property type="entry name" value="RIBULOSE BISPHOSPHATE CARBOXYLASE"/>
    <property type="match status" value="1"/>
</dbReference>
<dbReference type="PANTHER" id="PTHR42704:SF15">
    <property type="entry name" value="RIBULOSE BISPHOSPHATE CARBOXYLASE LARGE CHAIN"/>
    <property type="match status" value="1"/>
</dbReference>
<dbReference type="Pfam" id="PF00016">
    <property type="entry name" value="RuBisCO_large"/>
    <property type="match status" value="1"/>
</dbReference>
<dbReference type="Pfam" id="PF02788">
    <property type="entry name" value="RuBisCO_large_N"/>
    <property type="match status" value="1"/>
</dbReference>
<dbReference type="SFLD" id="SFLDG01052">
    <property type="entry name" value="RuBisCO"/>
    <property type="match status" value="1"/>
</dbReference>
<dbReference type="SFLD" id="SFLDS00014">
    <property type="entry name" value="RuBisCO"/>
    <property type="match status" value="1"/>
</dbReference>
<dbReference type="SFLD" id="SFLDG00301">
    <property type="entry name" value="RuBisCO-like_proteins"/>
    <property type="match status" value="1"/>
</dbReference>
<dbReference type="SUPFAM" id="SSF51649">
    <property type="entry name" value="RuBisCo, C-terminal domain"/>
    <property type="match status" value="1"/>
</dbReference>
<dbReference type="SUPFAM" id="SSF54966">
    <property type="entry name" value="RuBisCO, large subunit, small (N-terminal) domain"/>
    <property type="match status" value="1"/>
</dbReference>
<dbReference type="PROSITE" id="PS00157">
    <property type="entry name" value="RUBISCO_LARGE"/>
    <property type="match status" value="1"/>
</dbReference>
<comment type="function">
    <text evidence="1">RuBisCO catalyzes two reactions: the carboxylation of D-ribulose 1,5-bisphosphate, the primary event in carbon dioxide fixation, as well as the oxidative fragmentation of the pentose substrate in the photorespiration process. Both reactions occur simultaneously and in competition at the same active site.</text>
</comment>
<comment type="catalytic activity">
    <reaction evidence="1">
        <text>2 (2R)-3-phosphoglycerate + 2 H(+) = D-ribulose 1,5-bisphosphate + CO2 + H2O</text>
        <dbReference type="Rhea" id="RHEA:23124"/>
        <dbReference type="ChEBI" id="CHEBI:15377"/>
        <dbReference type="ChEBI" id="CHEBI:15378"/>
        <dbReference type="ChEBI" id="CHEBI:16526"/>
        <dbReference type="ChEBI" id="CHEBI:57870"/>
        <dbReference type="ChEBI" id="CHEBI:58272"/>
        <dbReference type="EC" id="4.1.1.39"/>
    </reaction>
</comment>
<comment type="catalytic activity">
    <reaction evidence="1">
        <text>D-ribulose 1,5-bisphosphate + O2 = 2-phosphoglycolate + (2R)-3-phosphoglycerate + 2 H(+)</text>
        <dbReference type="Rhea" id="RHEA:36631"/>
        <dbReference type="ChEBI" id="CHEBI:15378"/>
        <dbReference type="ChEBI" id="CHEBI:15379"/>
        <dbReference type="ChEBI" id="CHEBI:57870"/>
        <dbReference type="ChEBI" id="CHEBI:58033"/>
        <dbReference type="ChEBI" id="CHEBI:58272"/>
    </reaction>
</comment>
<comment type="cofactor">
    <cofactor evidence="1">
        <name>Mg(2+)</name>
        <dbReference type="ChEBI" id="CHEBI:18420"/>
    </cofactor>
    <text evidence="1">Binds 1 Mg(2+) ion per subunit.</text>
</comment>
<comment type="subunit">
    <text evidence="1">Heterohexadecamer of 8 large chains and 8 small chains; disulfide-linked. The disulfide link is formed within the large subunit homodimers.</text>
</comment>
<comment type="subcellular location">
    <subcellularLocation>
        <location>Plastid</location>
        <location>Chloroplast</location>
    </subcellularLocation>
</comment>
<comment type="PTM">
    <text evidence="1">The disulfide bond which can form in the large chain dimeric partners within the hexadecamer appears to be associated with oxidative stress and protein turnover.</text>
</comment>
<comment type="miscellaneous">
    <text evidence="1">The basic functional RuBisCO is composed of a large chain homodimer in a 'head-to-tail' conformation. In form I RuBisCO this homodimer is arranged in a barrel-like tetramer with the small subunits forming a tetrameric 'cap' on each end of the 'barrel'.</text>
</comment>
<comment type="similarity">
    <text evidence="1">Belongs to the RuBisCO large chain family. Type I subfamily.</text>
</comment>
<accession>Q05991</accession>
<keyword id="KW-0113">Calvin cycle</keyword>
<keyword id="KW-0120">Carbon dioxide fixation</keyword>
<keyword id="KW-0150">Chloroplast</keyword>
<keyword id="KW-1015">Disulfide bond</keyword>
<keyword id="KW-0456">Lyase</keyword>
<keyword id="KW-0460">Magnesium</keyword>
<keyword id="KW-0479">Metal-binding</keyword>
<keyword id="KW-0503">Monooxygenase</keyword>
<keyword id="KW-0560">Oxidoreductase</keyword>
<keyword id="KW-0601">Photorespiration</keyword>
<keyword id="KW-0602">Photosynthesis</keyword>
<keyword id="KW-0934">Plastid</keyword>
<proteinExistence type="inferred from homology"/>
<evidence type="ECO:0000255" key="1">
    <source>
        <dbReference type="HAMAP-Rule" id="MF_01338"/>
    </source>
</evidence>
<gene>
    <name evidence="1" type="primary">rbcL</name>
</gene>
<protein>
    <recommendedName>
        <fullName evidence="1">Ribulose bisphosphate carboxylase large chain</fullName>
        <shortName evidence="1">RuBisCO large subunit</shortName>
        <ecNumber evidence="1">4.1.1.39</ecNumber>
    </recommendedName>
</protein>
<reference key="1">
    <citation type="journal article" date="1992" name="Ann. Mo. Bot. Gard.">
        <title>Monophyly of the Asteridae and identification of their major lineages inferred from DNA sequences of rbcL.</title>
        <authorList>
            <person name="Olmstead R.G."/>
            <person name="Michaels H.J."/>
            <person name="Scott K.M."/>
            <person name="Palmer J.D."/>
        </authorList>
        <dbReference type="AGRICOLA" id="IND93014998"/>
    </citation>
    <scope>NUCLEOTIDE SEQUENCE [GENOMIC DNA]</scope>
</reference>
<name>RBL_LIGVU</name>
<sequence length="447" mass="49427">DILAAFRVTPQPGVPPEEAGAAVAXESSTGTWTTVWTDGLTSLDRYKGRCYHIEPVPGEADQYICYVAYPLDLFEEGSVTNMFTSIVGNVFGFKALRALRLEDLRXPTAYIKTFQGPPHGIQVERDKLNKYGRPLLGCTIKPKLGLSAKNYGRAVFECLRGGLDFTKDDENVNSQPFMRWRDRFLFCAEALYKSQAETGEIKGHYLNATAGTCEEMIKRAVFARELGAPIVMHDYLTGGFTANTSLAHYCRDNGLLLHIHRAMHAVIDRQKNHGIHFRVLAKALRMSGGDHIHSGTVVGKLEGERDITLGFVDLLRDDFIEKDRSRGIYFTQDWVSLPGVLPVASGGIHVWHMPALTEIFGDDSVLQFGGGTLGHPWGNAPGAVANRVALEACVQARNEGRDLASEGNEIIREASKWSPELAAACEVWKEIKFEFQAMDTLDPSSDK</sequence>
<organism>
    <name type="scientific">Ligustrum vulgare</name>
    <name type="common">Common privet</name>
    <name type="synonym">Ligustrum insulare</name>
    <dbReference type="NCBI Taxonomy" id="13597"/>
    <lineage>
        <taxon>Eukaryota</taxon>
        <taxon>Viridiplantae</taxon>
        <taxon>Streptophyta</taxon>
        <taxon>Embryophyta</taxon>
        <taxon>Tracheophyta</taxon>
        <taxon>Spermatophyta</taxon>
        <taxon>Magnoliopsida</taxon>
        <taxon>eudicotyledons</taxon>
        <taxon>Gunneridae</taxon>
        <taxon>Pentapetalae</taxon>
        <taxon>asterids</taxon>
        <taxon>lamiids</taxon>
        <taxon>Lamiales</taxon>
        <taxon>Oleaceae</taxon>
        <taxon>Oleeae</taxon>
        <taxon>Ligustrum</taxon>
    </lineage>
</organism>
<feature type="chain" id="PRO_0000062502" description="Ribulose bisphosphate carboxylase large chain">
    <location>
        <begin position="1" status="less than"/>
        <end position="447"/>
    </location>
</feature>
<feature type="active site" description="Proton acceptor" evidence="1">
    <location>
        <position position="141"/>
    </location>
</feature>
<feature type="active site" description="Proton acceptor" evidence="1">
    <location>
        <position position="260"/>
    </location>
</feature>
<feature type="binding site" description="in homodimeric partner" evidence="1">
    <location>
        <position position="89"/>
    </location>
    <ligand>
        <name>substrate</name>
    </ligand>
</feature>
<feature type="binding site" evidence="1">
    <location>
        <position position="139"/>
    </location>
    <ligand>
        <name>substrate</name>
    </ligand>
</feature>
<feature type="binding site" evidence="1">
    <location>
        <position position="143"/>
    </location>
    <ligand>
        <name>substrate</name>
    </ligand>
</feature>
<feature type="binding site" description="via carbamate group" evidence="1">
    <location>
        <position position="167"/>
    </location>
    <ligand>
        <name>Mg(2+)</name>
        <dbReference type="ChEBI" id="CHEBI:18420"/>
    </ligand>
</feature>
<feature type="binding site" evidence="1">
    <location>
        <position position="169"/>
    </location>
    <ligand>
        <name>Mg(2+)</name>
        <dbReference type="ChEBI" id="CHEBI:18420"/>
    </ligand>
</feature>
<feature type="binding site" evidence="1">
    <location>
        <position position="170"/>
    </location>
    <ligand>
        <name>Mg(2+)</name>
        <dbReference type="ChEBI" id="CHEBI:18420"/>
    </ligand>
</feature>
<feature type="binding site" evidence="1">
    <location>
        <position position="261"/>
    </location>
    <ligand>
        <name>substrate</name>
    </ligand>
</feature>
<feature type="binding site" evidence="1">
    <location>
        <position position="293"/>
    </location>
    <ligand>
        <name>substrate</name>
    </ligand>
</feature>
<feature type="binding site" evidence="1">
    <location>
        <position position="345"/>
    </location>
    <ligand>
        <name>substrate</name>
    </ligand>
</feature>
<feature type="site" description="Transition state stabilizer" evidence="1">
    <location>
        <position position="300"/>
    </location>
</feature>
<feature type="modified residue" description="N6-carboxylysine" evidence="1">
    <location>
        <position position="167"/>
    </location>
</feature>
<feature type="disulfide bond" description="Interchain; in linked form" evidence="1">
    <location>
        <position position="213"/>
    </location>
</feature>
<feature type="non-terminal residue">
    <location>
        <position position="1"/>
    </location>
</feature>
<geneLocation type="chloroplast"/>